<name>RPOA_CITSI</name>
<evidence type="ECO:0000255" key="1">
    <source>
        <dbReference type="HAMAP-Rule" id="MF_00059"/>
    </source>
</evidence>
<sequence length="328" mass="37544">MVREKVKVSTRTLQWKCVESRADSKRLYYGRFILSPLMKGQADTIGIAMRRVLLGEIEGTCITRAKSEKIPHEYSTIVGIQESVHEILMNLKDIVLRSNLYGTCDALICVKGPGYVTAQDILLPPSVEIVDNTQHIASLTEPIDLSIGLQIERSRGYNIKTPNTFQDGNCYPIDAVFMPVRNANHSIQSYGNGNEKQEILFLEIWTNGSLTPKEALHEASRSLIDLFIPFLQAEDENLPLENNQYKVTLPFFTFHDRLAKLTKKKKEIALKSIFIDQSEMSPRIYNCLKKSNIHTLFDLLNTRQEDLMKIEHFRIEDVKQIMSILEKK</sequence>
<keyword id="KW-0150">Chloroplast</keyword>
<keyword id="KW-0240">DNA-directed RNA polymerase</keyword>
<keyword id="KW-0548">Nucleotidyltransferase</keyword>
<keyword id="KW-0934">Plastid</keyword>
<keyword id="KW-0804">Transcription</keyword>
<keyword id="KW-0808">Transferase</keyword>
<dbReference type="EC" id="2.7.7.6" evidence="1"/>
<dbReference type="EMBL" id="DQ864733">
    <property type="protein sequence ID" value="ABI49051.1"/>
    <property type="molecule type" value="Genomic_DNA"/>
</dbReference>
<dbReference type="RefSeq" id="YP_740508.1">
    <property type="nucleotide sequence ID" value="NC_008334.1"/>
</dbReference>
<dbReference type="SMR" id="Q09ME5"/>
<dbReference type="GeneID" id="4271184"/>
<dbReference type="KEGG" id="cit:4271184"/>
<dbReference type="OrthoDB" id="777556at71240"/>
<dbReference type="GO" id="GO:0009507">
    <property type="term" value="C:chloroplast"/>
    <property type="evidence" value="ECO:0007669"/>
    <property type="project" value="UniProtKB-SubCell"/>
</dbReference>
<dbReference type="GO" id="GO:0000428">
    <property type="term" value="C:DNA-directed RNA polymerase complex"/>
    <property type="evidence" value="ECO:0007669"/>
    <property type="project" value="UniProtKB-KW"/>
</dbReference>
<dbReference type="GO" id="GO:0005739">
    <property type="term" value="C:mitochondrion"/>
    <property type="evidence" value="ECO:0007669"/>
    <property type="project" value="GOC"/>
</dbReference>
<dbReference type="GO" id="GO:0003677">
    <property type="term" value="F:DNA binding"/>
    <property type="evidence" value="ECO:0007669"/>
    <property type="project" value="UniProtKB-UniRule"/>
</dbReference>
<dbReference type="GO" id="GO:0003899">
    <property type="term" value="F:DNA-directed RNA polymerase activity"/>
    <property type="evidence" value="ECO:0007669"/>
    <property type="project" value="UniProtKB-UniRule"/>
</dbReference>
<dbReference type="GO" id="GO:0046983">
    <property type="term" value="F:protein dimerization activity"/>
    <property type="evidence" value="ECO:0007669"/>
    <property type="project" value="InterPro"/>
</dbReference>
<dbReference type="GO" id="GO:0006351">
    <property type="term" value="P:DNA-templated transcription"/>
    <property type="evidence" value="ECO:0007669"/>
    <property type="project" value="UniProtKB-UniRule"/>
</dbReference>
<dbReference type="CDD" id="cd06928">
    <property type="entry name" value="RNAP_alpha_NTD"/>
    <property type="match status" value="1"/>
</dbReference>
<dbReference type="FunFam" id="2.170.120.12:FF:000001">
    <property type="entry name" value="DNA-directed RNA polymerase subunit alpha"/>
    <property type="match status" value="1"/>
</dbReference>
<dbReference type="FunFam" id="3.30.1360.10:FF:000039">
    <property type="entry name" value="DNA-directed RNA polymerase subunit alpha"/>
    <property type="match status" value="1"/>
</dbReference>
<dbReference type="Gene3D" id="1.10.150.20">
    <property type="entry name" value="5' to 3' exonuclease, C-terminal subdomain"/>
    <property type="match status" value="1"/>
</dbReference>
<dbReference type="Gene3D" id="2.170.120.12">
    <property type="entry name" value="DNA-directed RNA polymerase, insert domain"/>
    <property type="match status" value="1"/>
</dbReference>
<dbReference type="Gene3D" id="3.30.1360.10">
    <property type="entry name" value="RNA polymerase, RBP11-like subunit"/>
    <property type="match status" value="1"/>
</dbReference>
<dbReference type="HAMAP" id="MF_00059">
    <property type="entry name" value="RNApol_bact_RpoA"/>
    <property type="match status" value="1"/>
</dbReference>
<dbReference type="InterPro" id="IPR011262">
    <property type="entry name" value="DNA-dir_RNA_pol_insert"/>
</dbReference>
<dbReference type="InterPro" id="IPR011263">
    <property type="entry name" value="DNA-dir_RNA_pol_RpoA/D/Rpb3"/>
</dbReference>
<dbReference type="InterPro" id="IPR011773">
    <property type="entry name" value="DNA-dir_RpoA"/>
</dbReference>
<dbReference type="InterPro" id="IPR036603">
    <property type="entry name" value="RBP11-like"/>
</dbReference>
<dbReference type="InterPro" id="IPR011260">
    <property type="entry name" value="RNAP_asu_C"/>
</dbReference>
<dbReference type="InterPro" id="IPR036643">
    <property type="entry name" value="RNApol_insert_sf"/>
</dbReference>
<dbReference type="NCBIfam" id="TIGR02027">
    <property type="entry name" value="rpoA"/>
    <property type="match status" value="1"/>
</dbReference>
<dbReference type="Pfam" id="PF01000">
    <property type="entry name" value="RNA_pol_A_bac"/>
    <property type="match status" value="1"/>
</dbReference>
<dbReference type="Pfam" id="PF03118">
    <property type="entry name" value="RNA_pol_A_CTD"/>
    <property type="match status" value="1"/>
</dbReference>
<dbReference type="Pfam" id="PF01193">
    <property type="entry name" value="RNA_pol_L"/>
    <property type="match status" value="1"/>
</dbReference>
<dbReference type="SMART" id="SM00662">
    <property type="entry name" value="RPOLD"/>
    <property type="match status" value="1"/>
</dbReference>
<dbReference type="SUPFAM" id="SSF47789">
    <property type="entry name" value="C-terminal domain of RNA polymerase alpha subunit"/>
    <property type="match status" value="1"/>
</dbReference>
<dbReference type="SUPFAM" id="SSF56553">
    <property type="entry name" value="Insert subdomain of RNA polymerase alpha subunit"/>
    <property type="match status" value="1"/>
</dbReference>
<dbReference type="SUPFAM" id="SSF55257">
    <property type="entry name" value="RBP11-like subunits of RNA polymerase"/>
    <property type="match status" value="1"/>
</dbReference>
<geneLocation type="chloroplast"/>
<proteinExistence type="inferred from homology"/>
<accession>Q09ME5</accession>
<organism>
    <name type="scientific">Citrus sinensis</name>
    <name type="common">Sweet orange</name>
    <name type="synonym">Citrus aurantium var. sinensis</name>
    <dbReference type="NCBI Taxonomy" id="2711"/>
    <lineage>
        <taxon>Eukaryota</taxon>
        <taxon>Viridiplantae</taxon>
        <taxon>Streptophyta</taxon>
        <taxon>Embryophyta</taxon>
        <taxon>Tracheophyta</taxon>
        <taxon>Spermatophyta</taxon>
        <taxon>Magnoliopsida</taxon>
        <taxon>eudicotyledons</taxon>
        <taxon>Gunneridae</taxon>
        <taxon>Pentapetalae</taxon>
        <taxon>rosids</taxon>
        <taxon>malvids</taxon>
        <taxon>Sapindales</taxon>
        <taxon>Rutaceae</taxon>
        <taxon>Aurantioideae</taxon>
        <taxon>Citrus</taxon>
    </lineage>
</organism>
<gene>
    <name evidence="1" type="primary">rpoA</name>
</gene>
<comment type="function">
    <text evidence="1">DNA-dependent RNA polymerase catalyzes the transcription of DNA into RNA using the four ribonucleoside triphosphates as substrates.</text>
</comment>
<comment type="catalytic activity">
    <reaction evidence="1">
        <text>RNA(n) + a ribonucleoside 5'-triphosphate = RNA(n+1) + diphosphate</text>
        <dbReference type="Rhea" id="RHEA:21248"/>
        <dbReference type="Rhea" id="RHEA-COMP:14527"/>
        <dbReference type="Rhea" id="RHEA-COMP:17342"/>
        <dbReference type="ChEBI" id="CHEBI:33019"/>
        <dbReference type="ChEBI" id="CHEBI:61557"/>
        <dbReference type="ChEBI" id="CHEBI:140395"/>
        <dbReference type="EC" id="2.7.7.6"/>
    </reaction>
</comment>
<comment type="subunit">
    <text evidence="1">In plastids the minimal PEP RNA polymerase catalytic core is composed of four subunits: alpha, beta, beta', and beta''. When a (nuclear-encoded) sigma factor is associated with the core the holoenzyme is formed, which can initiate transcription.</text>
</comment>
<comment type="subcellular location">
    <subcellularLocation>
        <location>Plastid</location>
        <location>Chloroplast</location>
    </subcellularLocation>
</comment>
<comment type="domain">
    <text evidence="1">The N-terminal domain is essential for RNAP assembly and basal transcription, whereas the C-terminal domain is involved in interaction with transcriptional regulators and with upstream promoter elements.</text>
</comment>
<comment type="similarity">
    <text evidence="1">Belongs to the RNA polymerase alpha chain family.</text>
</comment>
<feature type="chain" id="PRO_0000275685" description="DNA-directed RNA polymerase subunit alpha">
    <location>
        <begin position="1"/>
        <end position="328"/>
    </location>
</feature>
<feature type="region of interest" description="Alpha N-terminal domain (alpha-NTD)" evidence="1">
    <location>
        <begin position="1"/>
        <end position="234"/>
    </location>
</feature>
<feature type="region of interest" description="Alpha C-terminal domain (alpha-CTD)" evidence="1">
    <location>
        <begin position="268"/>
        <end position="328"/>
    </location>
</feature>
<protein>
    <recommendedName>
        <fullName evidence="1">DNA-directed RNA polymerase subunit alpha</fullName>
        <shortName evidence="1">PEP</shortName>
        <ecNumber evidence="1">2.7.7.6</ecNumber>
    </recommendedName>
    <alternativeName>
        <fullName evidence="1">Plastid-encoded RNA polymerase subunit alpha</fullName>
        <shortName evidence="1">RNA polymerase subunit alpha</shortName>
    </alternativeName>
</protein>
<reference key="1">
    <citation type="journal article" date="2006" name="BMC Plant Biol.">
        <title>The complete chloroplast genome sequence of Citrus sinensis (L.) Osbeck var 'Ridge Pineapple': organization and phylogenetic relationships to other angiosperms.</title>
        <authorList>
            <person name="Bausher M.G."/>
            <person name="Singh N.D."/>
            <person name="Lee S.-B."/>
            <person name="Jansen R.K."/>
            <person name="Daniell H."/>
        </authorList>
    </citation>
    <scope>NUCLEOTIDE SEQUENCE [LARGE SCALE GENOMIC DNA]</scope>
    <source>
        <strain>cv. Osbeck var. Ridge Pineapple</strain>
    </source>
</reference>